<reference key="1">
    <citation type="submission" date="2006-12" db="EMBL/GenBank/DDBJ databases">
        <title>Complete sequence of Shewanella sp. W3-18-1.</title>
        <authorList>
            <consortium name="US DOE Joint Genome Institute"/>
            <person name="Copeland A."/>
            <person name="Lucas S."/>
            <person name="Lapidus A."/>
            <person name="Barry K."/>
            <person name="Detter J.C."/>
            <person name="Glavina del Rio T."/>
            <person name="Hammon N."/>
            <person name="Israni S."/>
            <person name="Dalin E."/>
            <person name="Tice H."/>
            <person name="Pitluck S."/>
            <person name="Chain P."/>
            <person name="Malfatti S."/>
            <person name="Shin M."/>
            <person name="Vergez L."/>
            <person name="Schmutz J."/>
            <person name="Larimer F."/>
            <person name="Land M."/>
            <person name="Hauser L."/>
            <person name="Kyrpides N."/>
            <person name="Lykidis A."/>
            <person name="Tiedje J."/>
            <person name="Richardson P."/>
        </authorList>
    </citation>
    <scope>NUCLEOTIDE SEQUENCE [LARGE SCALE GENOMIC DNA]</scope>
    <source>
        <strain>W3-18-1</strain>
    </source>
</reference>
<comment type="function">
    <text evidence="1">Transfers the 4'-phosphopantetheine moiety from coenzyme A to a Ser of acyl-carrier-protein.</text>
</comment>
<comment type="catalytic activity">
    <reaction evidence="1">
        <text>apo-[ACP] + CoA = holo-[ACP] + adenosine 3',5'-bisphosphate + H(+)</text>
        <dbReference type="Rhea" id="RHEA:12068"/>
        <dbReference type="Rhea" id="RHEA-COMP:9685"/>
        <dbReference type="Rhea" id="RHEA-COMP:9690"/>
        <dbReference type="ChEBI" id="CHEBI:15378"/>
        <dbReference type="ChEBI" id="CHEBI:29999"/>
        <dbReference type="ChEBI" id="CHEBI:57287"/>
        <dbReference type="ChEBI" id="CHEBI:58343"/>
        <dbReference type="ChEBI" id="CHEBI:64479"/>
        <dbReference type="EC" id="2.7.8.7"/>
    </reaction>
</comment>
<comment type="cofactor">
    <cofactor evidence="1">
        <name>Mg(2+)</name>
        <dbReference type="ChEBI" id="CHEBI:18420"/>
    </cofactor>
</comment>
<comment type="subcellular location">
    <subcellularLocation>
        <location evidence="1">Cytoplasm</location>
    </subcellularLocation>
</comment>
<comment type="similarity">
    <text evidence="1">Belongs to the P-Pant transferase superfamily. AcpS family.</text>
</comment>
<accession>A1RMC3</accession>
<name>ACPS_SHESW</name>
<gene>
    <name evidence="1" type="primary">acpS</name>
    <name type="ordered locus">Sputw3181_3001</name>
</gene>
<sequence>MAIVGLGTDIVEIERIEAHVARSGDKLARRVLTEAELAIYIAHSQPSRYLAKRFAAKEAAAKALGTGIGRGVSFQHIHIGNTPDGAPTIRFTDGAQQRLAFLNGIFGHISIADEKSYAIATVILESC</sequence>
<organism>
    <name type="scientific">Shewanella sp. (strain W3-18-1)</name>
    <dbReference type="NCBI Taxonomy" id="351745"/>
    <lineage>
        <taxon>Bacteria</taxon>
        <taxon>Pseudomonadati</taxon>
        <taxon>Pseudomonadota</taxon>
        <taxon>Gammaproteobacteria</taxon>
        <taxon>Alteromonadales</taxon>
        <taxon>Shewanellaceae</taxon>
        <taxon>Shewanella</taxon>
    </lineage>
</organism>
<evidence type="ECO:0000255" key="1">
    <source>
        <dbReference type="HAMAP-Rule" id="MF_00101"/>
    </source>
</evidence>
<proteinExistence type="inferred from homology"/>
<protein>
    <recommendedName>
        <fullName evidence="1">Holo-[acyl-carrier-protein] synthase</fullName>
        <shortName evidence="1">Holo-ACP synthase</shortName>
        <ecNumber evidence="1">2.7.8.7</ecNumber>
    </recommendedName>
    <alternativeName>
        <fullName evidence="1">4'-phosphopantetheinyl transferase AcpS</fullName>
    </alternativeName>
</protein>
<dbReference type="EC" id="2.7.8.7" evidence="1"/>
<dbReference type="EMBL" id="CP000503">
    <property type="protein sequence ID" value="ABM25818.1"/>
    <property type="molecule type" value="Genomic_DNA"/>
</dbReference>
<dbReference type="RefSeq" id="WP_011790270.1">
    <property type="nucleotide sequence ID" value="NC_008750.1"/>
</dbReference>
<dbReference type="SMR" id="A1RMC3"/>
<dbReference type="KEGG" id="shw:Sputw3181_3001"/>
<dbReference type="HOGENOM" id="CLU_089696_3_1_6"/>
<dbReference type="Proteomes" id="UP000002597">
    <property type="component" value="Chromosome"/>
</dbReference>
<dbReference type="GO" id="GO:0005737">
    <property type="term" value="C:cytoplasm"/>
    <property type="evidence" value="ECO:0007669"/>
    <property type="project" value="UniProtKB-SubCell"/>
</dbReference>
<dbReference type="GO" id="GO:0008897">
    <property type="term" value="F:holo-[acyl-carrier-protein] synthase activity"/>
    <property type="evidence" value="ECO:0007669"/>
    <property type="project" value="UniProtKB-UniRule"/>
</dbReference>
<dbReference type="GO" id="GO:0000287">
    <property type="term" value="F:magnesium ion binding"/>
    <property type="evidence" value="ECO:0007669"/>
    <property type="project" value="UniProtKB-UniRule"/>
</dbReference>
<dbReference type="GO" id="GO:0006633">
    <property type="term" value="P:fatty acid biosynthetic process"/>
    <property type="evidence" value="ECO:0007669"/>
    <property type="project" value="UniProtKB-UniRule"/>
</dbReference>
<dbReference type="FunFam" id="3.90.470.20:FF:000001">
    <property type="entry name" value="Holo-[acyl-carrier-protein] synthase"/>
    <property type="match status" value="1"/>
</dbReference>
<dbReference type="Gene3D" id="3.90.470.20">
    <property type="entry name" value="4'-phosphopantetheinyl transferase domain"/>
    <property type="match status" value="1"/>
</dbReference>
<dbReference type="HAMAP" id="MF_00101">
    <property type="entry name" value="AcpS"/>
    <property type="match status" value="1"/>
</dbReference>
<dbReference type="InterPro" id="IPR008278">
    <property type="entry name" value="4-PPantetheinyl_Trfase_dom"/>
</dbReference>
<dbReference type="InterPro" id="IPR037143">
    <property type="entry name" value="4-PPantetheinyl_Trfase_dom_sf"/>
</dbReference>
<dbReference type="InterPro" id="IPR002582">
    <property type="entry name" value="ACPS"/>
</dbReference>
<dbReference type="InterPro" id="IPR004568">
    <property type="entry name" value="Ppantetheine-prot_Trfase_dom"/>
</dbReference>
<dbReference type="NCBIfam" id="TIGR00516">
    <property type="entry name" value="acpS"/>
    <property type="match status" value="1"/>
</dbReference>
<dbReference type="NCBIfam" id="TIGR00556">
    <property type="entry name" value="pantethn_trn"/>
    <property type="match status" value="1"/>
</dbReference>
<dbReference type="Pfam" id="PF01648">
    <property type="entry name" value="ACPS"/>
    <property type="match status" value="1"/>
</dbReference>
<dbReference type="SUPFAM" id="SSF56214">
    <property type="entry name" value="4'-phosphopantetheinyl transferase"/>
    <property type="match status" value="1"/>
</dbReference>
<keyword id="KW-0963">Cytoplasm</keyword>
<keyword id="KW-0275">Fatty acid biosynthesis</keyword>
<keyword id="KW-0276">Fatty acid metabolism</keyword>
<keyword id="KW-0444">Lipid biosynthesis</keyword>
<keyword id="KW-0443">Lipid metabolism</keyword>
<keyword id="KW-0460">Magnesium</keyword>
<keyword id="KW-0479">Metal-binding</keyword>
<keyword id="KW-0808">Transferase</keyword>
<feature type="chain" id="PRO_1000008499" description="Holo-[acyl-carrier-protein] synthase">
    <location>
        <begin position="1"/>
        <end position="127"/>
    </location>
</feature>
<feature type="binding site" evidence="1">
    <location>
        <position position="9"/>
    </location>
    <ligand>
        <name>Mg(2+)</name>
        <dbReference type="ChEBI" id="CHEBI:18420"/>
    </ligand>
</feature>
<feature type="binding site" evidence="1">
    <location>
        <position position="58"/>
    </location>
    <ligand>
        <name>Mg(2+)</name>
        <dbReference type="ChEBI" id="CHEBI:18420"/>
    </ligand>
</feature>